<reference key="1">
    <citation type="journal article" date="2002" name="Nature">
        <title>The genome sequence of Schizosaccharomyces pombe.</title>
        <authorList>
            <person name="Wood V."/>
            <person name="Gwilliam R."/>
            <person name="Rajandream M.A."/>
            <person name="Lyne M.H."/>
            <person name="Lyne R."/>
            <person name="Stewart A."/>
            <person name="Sgouros J.G."/>
            <person name="Peat N."/>
            <person name="Hayles J."/>
            <person name="Baker S.G."/>
            <person name="Basham D."/>
            <person name="Bowman S."/>
            <person name="Brooks K."/>
            <person name="Brown D."/>
            <person name="Brown S."/>
            <person name="Chillingworth T."/>
            <person name="Churcher C.M."/>
            <person name="Collins M."/>
            <person name="Connor R."/>
            <person name="Cronin A."/>
            <person name="Davis P."/>
            <person name="Feltwell T."/>
            <person name="Fraser A."/>
            <person name="Gentles S."/>
            <person name="Goble A."/>
            <person name="Hamlin N."/>
            <person name="Harris D.E."/>
            <person name="Hidalgo J."/>
            <person name="Hodgson G."/>
            <person name="Holroyd S."/>
            <person name="Hornsby T."/>
            <person name="Howarth S."/>
            <person name="Huckle E.J."/>
            <person name="Hunt S."/>
            <person name="Jagels K."/>
            <person name="James K.D."/>
            <person name="Jones L."/>
            <person name="Jones M."/>
            <person name="Leather S."/>
            <person name="McDonald S."/>
            <person name="McLean J."/>
            <person name="Mooney P."/>
            <person name="Moule S."/>
            <person name="Mungall K.L."/>
            <person name="Murphy L.D."/>
            <person name="Niblett D."/>
            <person name="Odell C."/>
            <person name="Oliver K."/>
            <person name="O'Neil S."/>
            <person name="Pearson D."/>
            <person name="Quail M.A."/>
            <person name="Rabbinowitsch E."/>
            <person name="Rutherford K.M."/>
            <person name="Rutter S."/>
            <person name="Saunders D."/>
            <person name="Seeger K."/>
            <person name="Sharp S."/>
            <person name="Skelton J."/>
            <person name="Simmonds M.N."/>
            <person name="Squares R."/>
            <person name="Squares S."/>
            <person name="Stevens K."/>
            <person name="Taylor K."/>
            <person name="Taylor R.G."/>
            <person name="Tivey A."/>
            <person name="Walsh S.V."/>
            <person name="Warren T."/>
            <person name="Whitehead S."/>
            <person name="Woodward J.R."/>
            <person name="Volckaert G."/>
            <person name="Aert R."/>
            <person name="Robben J."/>
            <person name="Grymonprez B."/>
            <person name="Weltjens I."/>
            <person name="Vanstreels E."/>
            <person name="Rieger M."/>
            <person name="Schaefer M."/>
            <person name="Mueller-Auer S."/>
            <person name="Gabel C."/>
            <person name="Fuchs M."/>
            <person name="Duesterhoeft A."/>
            <person name="Fritzc C."/>
            <person name="Holzer E."/>
            <person name="Moestl D."/>
            <person name="Hilbert H."/>
            <person name="Borzym K."/>
            <person name="Langer I."/>
            <person name="Beck A."/>
            <person name="Lehrach H."/>
            <person name="Reinhardt R."/>
            <person name="Pohl T.M."/>
            <person name="Eger P."/>
            <person name="Zimmermann W."/>
            <person name="Wedler H."/>
            <person name="Wambutt R."/>
            <person name="Purnelle B."/>
            <person name="Goffeau A."/>
            <person name="Cadieu E."/>
            <person name="Dreano S."/>
            <person name="Gloux S."/>
            <person name="Lelaure V."/>
            <person name="Mottier S."/>
            <person name="Galibert F."/>
            <person name="Aves S.J."/>
            <person name="Xiang Z."/>
            <person name="Hunt C."/>
            <person name="Moore K."/>
            <person name="Hurst S.M."/>
            <person name="Lucas M."/>
            <person name="Rochet M."/>
            <person name="Gaillardin C."/>
            <person name="Tallada V.A."/>
            <person name="Garzon A."/>
            <person name="Thode G."/>
            <person name="Daga R.R."/>
            <person name="Cruzado L."/>
            <person name="Jimenez J."/>
            <person name="Sanchez M."/>
            <person name="del Rey F."/>
            <person name="Benito J."/>
            <person name="Dominguez A."/>
            <person name="Revuelta J.L."/>
            <person name="Moreno S."/>
            <person name="Armstrong J."/>
            <person name="Forsburg S.L."/>
            <person name="Cerutti L."/>
            <person name="Lowe T."/>
            <person name="McCombie W.R."/>
            <person name="Paulsen I."/>
            <person name="Potashkin J."/>
            <person name="Shpakovski G.V."/>
            <person name="Ussery D."/>
            <person name="Barrell B.G."/>
            <person name="Nurse P."/>
        </authorList>
    </citation>
    <scope>NUCLEOTIDE SEQUENCE [LARGE SCALE GENOMIC DNA]</scope>
    <source>
        <strain>972 / ATCC 24843</strain>
    </source>
</reference>
<evidence type="ECO:0000250" key="1"/>
<evidence type="ECO:0000256" key="2">
    <source>
        <dbReference type="SAM" id="MobiDB-lite"/>
    </source>
</evidence>
<evidence type="ECO:0000305" key="3"/>
<organism>
    <name type="scientific">Schizosaccharomyces pombe (strain 972 / ATCC 24843)</name>
    <name type="common">Fission yeast</name>
    <dbReference type="NCBI Taxonomy" id="284812"/>
    <lineage>
        <taxon>Eukaryota</taxon>
        <taxon>Fungi</taxon>
        <taxon>Dikarya</taxon>
        <taxon>Ascomycota</taxon>
        <taxon>Taphrinomycotina</taxon>
        <taxon>Schizosaccharomycetes</taxon>
        <taxon>Schizosaccharomycetales</taxon>
        <taxon>Schizosaccharomycetaceae</taxon>
        <taxon>Schizosaccharomyces</taxon>
    </lineage>
</organism>
<proteinExistence type="inferred from homology"/>
<gene>
    <name type="ORF">SPAC22G7.10</name>
</gene>
<sequence>MSNADQHMDVDEDEYLYGETIEERNDGVTVSNAKSPEQASEESDDSDIEFIIETKPGERAEPLGGSIATLGSTRPSAKPQVEKTAVEVKTTEPQDLSTAETAPKVDIDAVPTIDGKNIFEIDLESFDDKPWRKPGADISDYFNYGFDEFTWAAYCAKQTTLRDDFSPQKFMASLAQIPGPLPSGNVPSPAEFQAMMASGFPPFMPIPPPIGGPQEDMGYSRNFPVHASSNYNTTHTSGGGVHSGAATPNAYVNNNPSSSRRESESPANSPNITSSAGMTHAQPTHNPTSSYGNGASTNYNASRPPSNHPHSSNYPSSSRRKPSPDRYSNYSSRGSGGRYRRNRY</sequence>
<comment type="function">
    <text evidence="1">Pre-mRNA polyadenylation factor that directly interacts with poly(A) polymerase.</text>
</comment>
<comment type="subcellular location">
    <subcellularLocation>
        <location evidence="1">Nucleus</location>
    </subcellularLocation>
</comment>
<comment type="similarity">
    <text evidence="3">Belongs to the FIP1 family.</text>
</comment>
<accession>Q09801</accession>
<keyword id="KW-0507">mRNA processing</keyword>
<keyword id="KW-0539">Nucleus</keyword>
<keyword id="KW-1185">Reference proteome</keyword>
<protein>
    <recommendedName>
        <fullName>Pre-mRNA polyadenylation factor fip1</fullName>
    </recommendedName>
</protein>
<feature type="chain" id="PRO_0000215043" description="Pre-mRNA polyadenylation factor fip1">
    <location>
        <begin position="1"/>
        <end position="344"/>
    </location>
</feature>
<feature type="region of interest" description="Disordered" evidence="2">
    <location>
        <begin position="1"/>
        <end position="99"/>
    </location>
</feature>
<feature type="region of interest" description="Disordered" evidence="2">
    <location>
        <begin position="230"/>
        <end position="344"/>
    </location>
</feature>
<feature type="compositionally biased region" description="Polar residues" evidence="2">
    <location>
        <begin position="28"/>
        <end position="38"/>
    </location>
</feature>
<feature type="compositionally biased region" description="Acidic residues" evidence="2">
    <location>
        <begin position="39"/>
        <end position="50"/>
    </location>
</feature>
<feature type="compositionally biased region" description="Basic and acidic residues" evidence="2">
    <location>
        <begin position="80"/>
        <end position="92"/>
    </location>
</feature>
<feature type="compositionally biased region" description="Low complexity" evidence="2">
    <location>
        <begin position="243"/>
        <end position="258"/>
    </location>
</feature>
<feature type="compositionally biased region" description="Polar residues" evidence="2">
    <location>
        <begin position="271"/>
        <end position="301"/>
    </location>
</feature>
<feature type="compositionally biased region" description="Low complexity" evidence="2">
    <location>
        <begin position="302"/>
        <end position="317"/>
    </location>
</feature>
<name>FIP1X_SCHPO</name>
<dbReference type="EMBL" id="CU329670">
    <property type="protein sequence ID" value="CAA91134.1"/>
    <property type="molecule type" value="Genomic_DNA"/>
</dbReference>
<dbReference type="PIR" id="T11620">
    <property type="entry name" value="T11620"/>
</dbReference>
<dbReference type="SMR" id="Q09801"/>
<dbReference type="BioGRID" id="278363">
    <property type="interactions" value="11"/>
</dbReference>
<dbReference type="FunCoup" id="Q09801">
    <property type="interactions" value="49"/>
</dbReference>
<dbReference type="STRING" id="284812.Q09801"/>
<dbReference type="iPTMnet" id="Q09801"/>
<dbReference type="PaxDb" id="4896-SPAC22G7.10.1"/>
<dbReference type="EnsemblFungi" id="SPAC22G7.10.1">
    <property type="protein sequence ID" value="SPAC22G7.10.1:pep"/>
    <property type="gene ID" value="SPAC22G7.10"/>
</dbReference>
<dbReference type="KEGG" id="spo:2541873"/>
<dbReference type="PomBase" id="SPAC22G7.10"/>
<dbReference type="VEuPathDB" id="FungiDB:SPAC22G7.10"/>
<dbReference type="eggNOG" id="KOG1049">
    <property type="taxonomic scope" value="Eukaryota"/>
</dbReference>
<dbReference type="HOGENOM" id="CLU_765384_0_0_1"/>
<dbReference type="InParanoid" id="Q09801"/>
<dbReference type="OMA" id="TWAAYCA"/>
<dbReference type="Reactome" id="R-SPO-159231">
    <property type="pathway name" value="Transport of Mature mRNA Derived from an Intronless Transcript"/>
</dbReference>
<dbReference type="Reactome" id="R-SPO-77595">
    <property type="pathway name" value="Processing of Intronless Pre-mRNAs"/>
</dbReference>
<dbReference type="PRO" id="PR:Q09801"/>
<dbReference type="Proteomes" id="UP000002485">
    <property type="component" value="Chromosome I"/>
</dbReference>
<dbReference type="GO" id="GO:0000785">
    <property type="term" value="C:chromatin"/>
    <property type="evidence" value="ECO:0000314"/>
    <property type="project" value="PomBase"/>
</dbReference>
<dbReference type="GO" id="GO:1990342">
    <property type="term" value="C:heterochromatin island"/>
    <property type="evidence" value="ECO:0000314"/>
    <property type="project" value="PomBase"/>
</dbReference>
<dbReference type="GO" id="GO:0005847">
    <property type="term" value="C:mRNA cleavage and polyadenylation specificity factor complex"/>
    <property type="evidence" value="ECO:0000314"/>
    <property type="project" value="PomBase"/>
</dbReference>
<dbReference type="GO" id="GO:1990251">
    <property type="term" value="C:nuclear exosome focus"/>
    <property type="evidence" value="ECO:0000314"/>
    <property type="project" value="PomBase"/>
</dbReference>
<dbReference type="GO" id="GO:0005634">
    <property type="term" value="C:nucleus"/>
    <property type="evidence" value="ECO:0007005"/>
    <property type="project" value="PomBase"/>
</dbReference>
<dbReference type="GO" id="GO:0180010">
    <property type="term" value="P:co-transcriptional mRNA 3'-end processing, cleavage and polyadenylation pathway"/>
    <property type="evidence" value="ECO:0000315"/>
    <property type="project" value="PomBase"/>
</dbReference>
<dbReference type="GO" id="GO:0071031">
    <property type="term" value="P:nuclear mRNA surveillance of mRNA 3'-end processing"/>
    <property type="evidence" value="ECO:0000315"/>
    <property type="project" value="PomBase"/>
</dbReference>
<dbReference type="GO" id="GO:0031508">
    <property type="term" value="P:pericentric heterochromatin formation"/>
    <property type="evidence" value="ECO:0000315"/>
    <property type="project" value="PomBase"/>
</dbReference>
<dbReference type="InterPro" id="IPR007854">
    <property type="entry name" value="Fip1_dom"/>
</dbReference>
<dbReference type="InterPro" id="IPR051187">
    <property type="entry name" value="Pre-mRNA_3'-end_processing_reg"/>
</dbReference>
<dbReference type="PANTHER" id="PTHR13484">
    <property type="entry name" value="FIP1-LIKE 1 PROTEIN"/>
    <property type="match status" value="1"/>
</dbReference>
<dbReference type="PANTHER" id="PTHR13484:SF0">
    <property type="entry name" value="PRE-MRNA 3'-END-PROCESSING FACTOR FIP1"/>
    <property type="match status" value="1"/>
</dbReference>
<dbReference type="Pfam" id="PF05182">
    <property type="entry name" value="Fip1"/>
    <property type="match status" value="1"/>
</dbReference>